<reference key="1">
    <citation type="journal article" date="2009" name="PLoS ONE">
        <title>Genome sequence of the endosymbiont Rickettsia peacockii and comparison with virulent Rickettsia rickettsii: identification of virulence factors.</title>
        <authorList>
            <person name="Felsheim R.F."/>
            <person name="Kurtti T.J."/>
            <person name="Munderloh U.G."/>
        </authorList>
    </citation>
    <scope>NUCLEOTIDE SEQUENCE [LARGE SCALE GENOMIC DNA]</scope>
    <source>
        <strain>Rustic</strain>
    </source>
</reference>
<comment type="function">
    <text evidence="1">The RuvA-RuvB-RuvC complex processes Holliday junction (HJ) DNA during genetic recombination and DNA repair, while the RuvA-RuvB complex plays an important role in the rescue of blocked DNA replication forks via replication fork reversal (RFR). RuvA specifically binds to HJ cruciform DNA, conferring on it an open structure. The RuvB hexamer acts as an ATP-dependent pump, pulling dsDNA into and through the RuvAB complex. HJ branch migration allows RuvC to scan DNA until it finds its consensus sequence, where it cleaves and resolves the cruciform DNA.</text>
</comment>
<comment type="subunit">
    <text evidence="1">Homotetramer. Forms an RuvA(8)-RuvB(12)-Holliday junction (HJ) complex. HJ DNA is sandwiched between 2 RuvA tetramers; dsDNA enters through RuvA and exits via RuvB. An RuvB hexamer assembles on each DNA strand where it exits the tetramer. Each RuvB hexamer is contacted by two RuvA subunits (via domain III) on 2 adjacent RuvB subunits; this complex drives branch migration. In the full resolvosome a probable DNA-RuvA(4)-RuvB(12)-RuvC(2) complex forms which resolves the HJ.</text>
</comment>
<comment type="subcellular location">
    <subcellularLocation>
        <location evidence="1">Cytoplasm</location>
    </subcellularLocation>
</comment>
<comment type="domain">
    <text evidence="1">Has three domains with a flexible linker between the domains II and III and assumes an 'L' shape. Domain III is highly mobile and contacts RuvB.</text>
</comment>
<comment type="similarity">
    <text evidence="1">Belongs to the RuvA family.</text>
</comment>
<name>RUVA_RICPU</name>
<organism>
    <name type="scientific">Rickettsia peacockii (strain Rustic)</name>
    <dbReference type="NCBI Taxonomy" id="562019"/>
    <lineage>
        <taxon>Bacteria</taxon>
        <taxon>Pseudomonadati</taxon>
        <taxon>Pseudomonadota</taxon>
        <taxon>Alphaproteobacteria</taxon>
        <taxon>Rickettsiales</taxon>
        <taxon>Rickettsiaceae</taxon>
        <taxon>Rickettsieae</taxon>
        <taxon>Rickettsia</taxon>
        <taxon>spotted fever group</taxon>
    </lineage>
</organism>
<protein>
    <recommendedName>
        <fullName evidence="1">Holliday junction branch migration complex subunit RuvA</fullName>
    </recommendedName>
</protein>
<dbReference type="EMBL" id="CP001227">
    <property type="protein sequence ID" value="ACR47732.1"/>
    <property type="molecule type" value="Genomic_DNA"/>
</dbReference>
<dbReference type="RefSeq" id="WP_012736921.1">
    <property type="nucleotide sequence ID" value="NC_012730.1"/>
</dbReference>
<dbReference type="SMR" id="C4K2D5"/>
<dbReference type="KEGG" id="rpk:RPR_05880"/>
<dbReference type="HOGENOM" id="CLU_087936_3_0_5"/>
<dbReference type="Proteomes" id="UP000005015">
    <property type="component" value="Chromosome"/>
</dbReference>
<dbReference type="GO" id="GO:0005737">
    <property type="term" value="C:cytoplasm"/>
    <property type="evidence" value="ECO:0007669"/>
    <property type="project" value="UniProtKB-SubCell"/>
</dbReference>
<dbReference type="GO" id="GO:0009379">
    <property type="term" value="C:Holliday junction helicase complex"/>
    <property type="evidence" value="ECO:0007669"/>
    <property type="project" value="InterPro"/>
</dbReference>
<dbReference type="GO" id="GO:0048476">
    <property type="term" value="C:Holliday junction resolvase complex"/>
    <property type="evidence" value="ECO:0007669"/>
    <property type="project" value="UniProtKB-UniRule"/>
</dbReference>
<dbReference type="GO" id="GO:0005524">
    <property type="term" value="F:ATP binding"/>
    <property type="evidence" value="ECO:0007669"/>
    <property type="project" value="InterPro"/>
</dbReference>
<dbReference type="GO" id="GO:0000400">
    <property type="term" value="F:four-way junction DNA binding"/>
    <property type="evidence" value="ECO:0007669"/>
    <property type="project" value="UniProtKB-UniRule"/>
</dbReference>
<dbReference type="GO" id="GO:0009378">
    <property type="term" value="F:four-way junction helicase activity"/>
    <property type="evidence" value="ECO:0007669"/>
    <property type="project" value="InterPro"/>
</dbReference>
<dbReference type="GO" id="GO:0006310">
    <property type="term" value="P:DNA recombination"/>
    <property type="evidence" value="ECO:0007669"/>
    <property type="project" value="UniProtKB-UniRule"/>
</dbReference>
<dbReference type="GO" id="GO:0006281">
    <property type="term" value="P:DNA repair"/>
    <property type="evidence" value="ECO:0007669"/>
    <property type="project" value="UniProtKB-UniRule"/>
</dbReference>
<dbReference type="CDD" id="cd14332">
    <property type="entry name" value="UBA_RuvA_C"/>
    <property type="match status" value="1"/>
</dbReference>
<dbReference type="Gene3D" id="1.10.150.20">
    <property type="entry name" value="5' to 3' exonuclease, C-terminal subdomain"/>
    <property type="match status" value="1"/>
</dbReference>
<dbReference type="Gene3D" id="1.10.8.10">
    <property type="entry name" value="DNA helicase RuvA subunit, C-terminal domain"/>
    <property type="match status" value="1"/>
</dbReference>
<dbReference type="Gene3D" id="2.40.50.140">
    <property type="entry name" value="Nucleic acid-binding proteins"/>
    <property type="match status" value="1"/>
</dbReference>
<dbReference type="HAMAP" id="MF_00031">
    <property type="entry name" value="DNA_HJ_migration_RuvA"/>
    <property type="match status" value="1"/>
</dbReference>
<dbReference type="InterPro" id="IPR013849">
    <property type="entry name" value="DNA_helicase_Holl-junc_RuvA_I"/>
</dbReference>
<dbReference type="InterPro" id="IPR012340">
    <property type="entry name" value="NA-bd_OB-fold"/>
</dbReference>
<dbReference type="InterPro" id="IPR000085">
    <property type="entry name" value="RuvA"/>
</dbReference>
<dbReference type="InterPro" id="IPR010994">
    <property type="entry name" value="RuvA_2-like"/>
</dbReference>
<dbReference type="InterPro" id="IPR011114">
    <property type="entry name" value="RuvA_C"/>
</dbReference>
<dbReference type="InterPro" id="IPR036267">
    <property type="entry name" value="RuvA_C_sf"/>
</dbReference>
<dbReference type="NCBIfam" id="TIGR00084">
    <property type="entry name" value="ruvA"/>
    <property type="match status" value="1"/>
</dbReference>
<dbReference type="Pfam" id="PF14520">
    <property type="entry name" value="HHH_5"/>
    <property type="match status" value="1"/>
</dbReference>
<dbReference type="Pfam" id="PF07499">
    <property type="entry name" value="RuvA_C"/>
    <property type="match status" value="1"/>
</dbReference>
<dbReference type="Pfam" id="PF01330">
    <property type="entry name" value="RuvA_N"/>
    <property type="match status" value="1"/>
</dbReference>
<dbReference type="SUPFAM" id="SSF46929">
    <property type="entry name" value="DNA helicase RuvA subunit, C-terminal domain"/>
    <property type="match status" value="1"/>
</dbReference>
<dbReference type="SUPFAM" id="SSF50249">
    <property type="entry name" value="Nucleic acid-binding proteins"/>
    <property type="match status" value="1"/>
</dbReference>
<dbReference type="SUPFAM" id="SSF47781">
    <property type="entry name" value="RuvA domain 2-like"/>
    <property type="match status" value="1"/>
</dbReference>
<sequence length="203" mass="22249">MIGKLSGKVDSQGDDYVIIDVNGVGYLVYASDKTLGTLAEGEFYKLFIETHVREEHMHLYGFLTLEEKIFFNLLQSVNGIGTRMALFILSSLTPSDIQIAVNNEDKNIFKAISGVGAKLAERIVLELKGKVAKISSGSAIIKESLNIKNITPVASNEVIKALVNLGFSRFEAQNAVQGIITQNPEISIDELIKTALKNRNSNF</sequence>
<feature type="chain" id="PRO_1000202002" description="Holliday junction branch migration complex subunit RuvA">
    <location>
        <begin position="1"/>
        <end position="203"/>
    </location>
</feature>
<feature type="region of interest" description="Domain I" evidence="1">
    <location>
        <begin position="1"/>
        <end position="63"/>
    </location>
</feature>
<feature type="region of interest" description="Domain II" evidence="1">
    <location>
        <begin position="64"/>
        <end position="142"/>
    </location>
</feature>
<feature type="region of interest" description="Flexible linker" evidence="1">
    <location>
        <begin position="143"/>
        <end position="149"/>
    </location>
</feature>
<feature type="region of interest" description="Domain III" evidence="1">
    <location>
        <begin position="150"/>
        <end position="203"/>
    </location>
</feature>
<evidence type="ECO:0000255" key="1">
    <source>
        <dbReference type="HAMAP-Rule" id="MF_00031"/>
    </source>
</evidence>
<keyword id="KW-0963">Cytoplasm</keyword>
<keyword id="KW-0227">DNA damage</keyword>
<keyword id="KW-0233">DNA recombination</keyword>
<keyword id="KW-0234">DNA repair</keyword>
<keyword id="KW-0238">DNA-binding</keyword>
<accession>C4K2D5</accession>
<proteinExistence type="inferred from homology"/>
<gene>
    <name evidence="1" type="primary">ruvA</name>
    <name type="ordered locus">RPR_05880</name>
</gene>